<keyword id="KW-0028">Amino-acid biosynthesis</keyword>
<keyword id="KW-0963">Cytoplasm</keyword>
<keyword id="KW-0368">Histidine biosynthesis</keyword>
<keyword id="KW-0456">Lyase</keyword>
<keyword id="KW-1185">Reference proteome</keyword>
<protein>
    <recommendedName>
        <fullName evidence="1">Imidazoleglycerol-phosphate dehydratase</fullName>
        <shortName evidence="1">IGPD</shortName>
        <ecNumber evidence="1">4.2.1.19</ecNumber>
    </recommendedName>
</protein>
<evidence type="ECO:0000255" key="1">
    <source>
        <dbReference type="HAMAP-Rule" id="MF_00076"/>
    </source>
</evidence>
<gene>
    <name evidence="1" type="primary">hisB</name>
    <name type="ordered locus">Amuc_1474</name>
</gene>
<organism>
    <name type="scientific">Akkermansia muciniphila (strain ATCC BAA-835 / DSM 22959 / JCM 33894 / BCRC 81048 / CCUG 64013 / CIP 107961 / Muc)</name>
    <dbReference type="NCBI Taxonomy" id="349741"/>
    <lineage>
        <taxon>Bacteria</taxon>
        <taxon>Pseudomonadati</taxon>
        <taxon>Verrucomicrobiota</taxon>
        <taxon>Verrucomicrobiia</taxon>
        <taxon>Verrucomicrobiales</taxon>
        <taxon>Akkermansiaceae</taxon>
        <taxon>Akkermansia</taxon>
    </lineage>
</organism>
<accession>B2UL23</accession>
<name>HIS7_AKKM8</name>
<sequence length="196" mass="21299">MRNASCKRVTGETDISMELNLDGTGCAAVATGHAFFDHMLDLLARHSLMDLTLQARGDLEVDAHHTVEDVGIVLGECIKNALGDKKGIVRYGCSYLPMDETLTRVVMDLSNRPYVAFRIPEGGLPDAPNFPLTLCEEFCRALANNLRCNLHVEVLYGRDGHHIAESVFKGIAHALRQAAAIDPRAAGTLPSTKGML</sequence>
<reference key="1">
    <citation type="journal article" date="2011" name="PLoS ONE">
        <title>The genome of Akkermansia muciniphila, a dedicated intestinal mucin degrader, and its use in exploring intestinal metagenomes.</title>
        <authorList>
            <person name="van Passel M.W."/>
            <person name="Kant R."/>
            <person name="Zoetendal E.G."/>
            <person name="Plugge C.M."/>
            <person name="Derrien M."/>
            <person name="Malfatti S.A."/>
            <person name="Chain P.S."/>
            <person name="Woyke T."/>
            <person name="Palva A."/>
            <person name="de Vos W.M."/>
            <person name="Smidt H."/>
        </authorList>
    </citation>
    <scope>NUCLEOTIDE SEQUENCE [LARGE SCALE GENOMIC DNA]</scope>
    <source>
        <strain>ATCC BAA-835 / DSM 22959 / JCM 33894 / BCRC 81048 / CCUG 64013 / CIP 107961 / Muc</strain>
    </source>
</reference>
<feature type="chain" id="PRO_1000092668" description="Imidazoleglycerol-phosphate dehydratase">
    <location>
        <begin position="1"/>
        <end position="196"/>
    </location>
</feature>
<dbReference type="EC" id="4.2.1.19" evidence="1"/>
<dbReference type="EMBL" id="CP001071">
    <property type="protein sequence ID" value="ACD05296.1"/>
    <property type="molecule type" value="Genomic_DNA"/>
</dbReference>
<dbReference type="RefSeq" id="WP_012420511.1">
    <property type="nucleotide sequence ID" value="NZ_CP071807.1"/>
</dbReference>
<dbReference type="SMR" id="B2UL23"/>
<dbReference type="STRING" id="349741.Amuc_1474"/>
<dbReference type="PaxDb" id="349741-Amuc_1474"/>
<dbReference type="KEGG" id="amu:Amuc_1474"/>
<dbReference type="eggNOG" id="COG0131">
    <property type="taxonomic scope" value="Bacteria"/>
</dbReference>
<dbReference type="HOGENOM" id="CLU_044308_3_0_0"/>
<dbReference type="OrthoDB" id="9790411at2"/>
<dbReference type="BioCyc" id="AMUC349741:G1GBX-1576-MONOMER"/>
<dbReference type="UniPathway" id="UPA00031">
    <property type="reaction ID" value="UER00011"/>
</dbReference>
<dbReference type="Proteomes" id="UP000001031">
    <property type="component" value="Chromosome"/>
</dbReference>
<dbReference type="GO" id="GO:0005737">
    <property type="term" value="C:cytoplasm"/>
    <property type="evidence" value="ECO:0007669"/>
    <property type="project" value="UniProtKB-SubCell"/>
</dbReference>
<dbReference type="GO" id="GO:0004424">
    <property type="term" value="F:imidazoleglycerol-phosphate dehydratase activity"/>
    <property type="evidence" value="ECO:0007669"/>
    <property type="project" value="UniProtKB-UniRule"/>
</dbReference>
<dbReference type="GO" id="GO:0000105">
    <property type="term" value="P:L-histidine biosynthetic process"/>
    <property type="evidence" value="ECO:0007669"/>
    <property type="project" value="UniProtKB-UniRule"/>
</dbReference>
<dbReference type="CDD" id="cd07914">
    <property type="entry name" value="IGPD"/>
    <property type="match status" value="1"/>
</dbReference>
<dbReference type="FunFam" id="3.30.230.40:FF:000001">
    <property type="entry name" value="Imidazoleglycerol-phosphate dehydratase HisB"/>
    <property type="match status" value="1"/>
</dbReference>
<dbReference type="FunFam" id="3.30.230.40:FF:000003">
    <property type="entry name" value="Imidazoleglycerol-phosphate dehydratase HisB"/>
    <property type="match status" value="1"/>
</dbReference>
<dbReference type="Gene3D" id="3.30.230.40">
    <property type="entry name" value="Imidazole glycerol phosphate dehydratase, domain 1"/>
    <property type="match status" value="2"/>
</dbReference>
<dbReference type="HAMAP" id="MF_00076">
    <property type="entry name" value="HisB"/>
    <property type="match status" value="1"/>
</dbReference>
<dbReference type="InterPro" id="IPR038494">
    <property type="entry name" value="IGPD_sf"/>
</dbReference>
<dbReference type="InterPro" id="IPR000807">
    <property type="entry name" value="ImidazoleglycerolP_deHydtase"/>
</dbReference>
<dbReference type="InterPro" id="IPR020565">
    <property type="entry name" value="ImidazoleglycerP_deHydtase_CS"/>
</dbReference>
<dbReference type="InterPro" id="IPR020568">
    <property type="entry name" value="Ribosomal_Su5_D2-typ_SF"/>
</dbReference>
<dbReference type="NCBIfam" id="NF002111">
    <property type="entry name" value="PRK00951.2-1"/>
    <property type="match status" value="1"/>
</dbReference>
<dbReference type="NCBIfam" id="NF002114">
    <property type="entry name" value="PRK00951.2-4"/>
    <property type="match status" value="1"/>
</dbReference>
<dbReference type="PANTHER" id="PTHR23133:SF2">
    <property type="entry name" value="IMIDAZOLEGLYCEROL-PHOSPHATE DEHYDRATASE"/>
    <property type="match status" value="1"/>
</dbReference>
<dbReference type="PANTHER" id="PTHR23133">
    <property type="entry name" value="IMIDAZOLEGLYCEROL-PHOSPHATE DEHYDRATASE HIS7"/>
    <property type="match status" value="1"/>
</dbReference>
<dbReference type="Pfam" id="PF00475">
    <property type="entry name" value="IGPD"/>
    <property type="match status" value="1"/>
</dbReference>
<dbReference type="SUPFAM" id="SSF54211">
    <property type="entry name" value="Ribosomal protein S5 domain 2-like"/>
    <property type="match status" value="2"/>
</dbReference>
<dbReference type="PROSITE" id="PS00954">
    <property type="entry name" value="IGP_DEHYDRATASE_1"/>
    <property type="match status" value="1"/>
</dbReference>
<dbReference type="PROSITE" id="PS00955">
    <property type="entry name" value="IGP_DEHYDRATASE_2"/>
    <property type="match status" value="1"/>
</dbReference>
<proteinExistence type="inferred from homology"/>
<comment type="catalytic activity">
    <reaction evidence="1">
        <text>D-erythro-1-(imidazol-4-yl)glycerol 3-phosphate = 3-(imidazol-4-yl)-2-oxopropyl phosphate + H2O</text>
        <dbReference type="Rhea" id="RHEA:11040"/>
        <dbReference type="ChEBI" id="CHEBI:15377"/>
        <dbReference type="ChEBI" id="CHEBI:57766"/>
        <dbReference type="ChEBI" id="CHEBI:58278"/>
        <dbReference type="EC" id="4.2.1.19"/>
    </reaction>
</comment>
<comment type="pathway">
    <text evidence="1">Amino-acid biosynthesis; L-histidine biosynthesis; L-histidine from 5-phospho-alpha-D-ribose 1-diphosphate: step 6/9.</text>
</comment>
<comment type="subcellular location">
    <subcellularLocation>
        <location evidence="1">Cytoplasm</location>
    </subcellularLocation>
</comment>
<comment type="similarity">
    <text evidence="1">Belongs to the imidazoleglycerol-phosphate dehydratase family.</text>
</comment>